<keyword id="KW-0067">ATP-binding</keyword>
<keyword id="KW-1003">Cell membrane</keyword>
<keyword id="KW-0472">Membrane</keyword>
<keyword id="KW-0547">Nucleotide-binding</keyword>
<keyword id="KW-1278">Translocase</keyword>
<keyword id="KW-0813">Transport</keyword>
<gene>
    <name evidence="1" type="primary">potA</name>
    <name type="ordered locus">MGAS10750_Spy0977</name>
</gene>
<comment type="function">
    <text evidence="1">Part of the ABC transporter complex PotABCD involved in spermidine/putrescine import. Responsible for energy coupling to the transport system.</text>
</comment>
<comment type="catalytic activity">
    <reaction evidence="1">
        <text>ATP + H2O + polyamine-[polyamine-binding protein]Side 1 = ADP + phosphate + polyamineSide 2 + [polyamine-binding protein]Side 1.</text>
        <dbReference type="EC" id="7.6.2.11"/>
    </reaction>
</comment>
<comment type="subunit">
    <text evidence="1">The complex is composed of two ATP-binding proteins (PotA), two transmembrane proteins (PotB and PotC) and a solute-binding protein (PotD).</text>
</comment>
<comment type="subcellular location">
    <subcellularLocation>
        <location evidence="1">Cell membrane</location>
        <topology evidence="1">Peripheral membrane protein</topology>
    </subcellularLocation>
</comment>
<comment type="similarity">
    <text evidence="1">Belongs to the ABC transporter superfamily. Spermidine/putrescine importer (TC 3.A.1.11.1) family.</text>
</comment>
<feature type="chain" id="PRO_0000286312" description="Spermidine/putrescine import ATP-binding protein PotA">
    <location>
        <begin position="1"/>
        <end position="384"/>
    </location>
</feature>
<feature type="domain" description="ABC transporter" evidence="1">
    <location>
        <begin position="6"/>
        <end position="238"/>
    </location>
</feature>
<feature type="binding site" evidence="1">
    <location>
        <begin position="40"/>
        <end position="47"/>
    </location>
    <ligand>
        <name>ATP</name>
        <dbReference type="ChEBI" id="CHEBI:30616"/>
    </ligand>
</feature>
<accession>Q1J6Q6</accession>
<protein>
    <recommendedName>
        <fullName evidence="1">Spermidine/putrescine import ATP-binding protein PotA</fullName>
        <ecNumber evidence="1">7.6.2.11</ecNumber>
    </recommendedName>
</protein>
<organism>
    <name type="scientific">Streptococcus pyogenes serotype M4 (strain MGAS10750)</name>
    <dbReference type="NCBI Taxonomy" id="370554"/>
    <lineage>
        <taxon>Bacteria</taxon>
        <taxon>Bacillati</taxon>
        <taxon>Bacillota</taxon>
        <taxon>Bacilli</taxon>
        <taxon>Lactobacillales</taxon>
        <taxon>Streptococcaceae</taxon>
        <taxon>Streptococcus</taxon>
    </lineage>
</organism>
<sequence length="384" mass="43838">MTKPIITFNNVSKTFEDSGTQVLKNINFDLEEGKFYTLLGASGSGKSTILNIMAGLLDASSGDIYLDGERINDLPINKRDIHTVFQNYALFPHMTVFENVAFALKLKKVDKKEIAKRVKETLKMVQLEGYENRSIQKLSGGQRQRVAIARAIINQPRVVLLDEPLSALDLKLRTEMQYELRELQQRLGITFVFVTHDQEEALAMSDWIFVMNEGEIVQSGTPVDIYDEPINHFVANFIGESNIINGTMIEDYLVSFNGKEFESVDGGMRPNEPVEVVIRPEDLQITLPEEGKLQVKVDTQLFRGVHYEIIAYDELGNEWMIHSTRKAIEGEVIGLDFTPEDLHIMRLNETEEEFDARIEEYVEMDEPEDGLINAIEEERNEENL</sequence>
<evidence type="ECO:0000255" key="1">
    <source>
        <dbReference type="HAMAP-Rule" id="MF_01726"/>
    </source>
</evidence>
<proteinExistence type="inferred from homology"/>
<name>POTA_STRPF</name>
<dbReference type="EC" id="7.6.2.11" evidence="1"/>
<dbReference type="EMBL" id="CP000262">
    <property type="protein sequence ID" value="ABF37927.1"/>
    <property type="molecule type" value="Genomic_DNA"/>
</dbReference>
<dbReference type="SMR" id="Q1J6Q6"/>
<dbReference type="KEGG" id="spi:MGAS10750_Spy0977"/>
<dbReference type="HOGENOM" id="CLU_000604_1_1_9"/>
<dbReference type="Proteomes" id="UP000002434">
    <property type="component" value="Chromosome"/>
</dbReference>
<dbReference type="GO" id="GO:0043190">
    <property type="term" value="C:ATP-binding cassette (ABC) transporter complex"/>
    <property type="evidence" value="ECO:0007669"/>
    <property type="project" value="InterPro"/>
</dbReference>
<dbReference type="GO" id="GO:0015417">
    <property type="term" value="F:ABC-type polyamine transporter activity"/>
    <property type="evidence" value="ECO:0007669"/>
    <property type="project" value="UniProtKB-EC"/>
</dbReference>
<dbReference type="GO" id="GO:0005524">
    <property type="term" value="F:ATP binding"/>
    <property type="evidence" value="ECO:0007669"/>
    <property type="project" value="UniProtKB-KW"/>
</dbReference>
<dbReference type="GO" id="GO:0016887">
    <property type="term" value="F:ATP hydrolysis activity"/>
    <property type="evidence" value="ECO:0007669"/>
    <property type="project" value="InterPro"/>
</dbReference>
<dbReference type="FunFam" id="3.40.50.300:FF:000042">
    <property type="entry name" value="Maltose/maltodextrin ABC transporter, ATP-binding protein"/>
    <property type="match status" value="1"/>
</dbReference>
<dbReference type="Gene3D" id="2.40.50.100">
    <property type="match status" value="1"/>
</dbReference>
<dbReference type="Gene3D" id="3.40.50.300">
    <property type="entry name" value="P-loop containing nucleotide triphosphate hydrolases"/>
    <property type="match status" value="1"/>
</dbReference>
<dbReference type="InterPro" id="IPR003593">
    <property type="entry name" value="AAA+_ATPase"/>
</dbReference>
<dbReference type="InterPro" id="IPR050093">
    <property type="entry name" value="ABC_SmlMolc_Importer"/>
</dbReference>
<dbReference type="InterPro" id="IPR003439">
    <property type="entry name" value="ABC_transporter-like_ATP-bd"/>
</dbReference>
<dbReference type="InterPro" id="IPR017871">
    <property type="entry name" value="ABC_transporter-like_CS"/>
</dbReference>
<dbReference type="InterPro" id="IPR008995">
    <property type="entry name" value="Mo/tungstate-bd_C_term_dom"/>
</dbReference>
<dbReference type="InterPro" id="IPR027417">
    <property type="entry name" value="P-loop_NTPase"/>
</dbReference>
<dbReference type="InterPro" id="IPR005893">
    <property type="entry name" value="PotA-like"/>
</dbReference>
<dbReference type="InterPro" id="IPR013611">
    <property type="entry name" value="Transp-assoc_OB_typ2"/>
</dbReference>
<dbReference type="NCBIfam" id="TIGR01187">
    <property type="entry name" value="potA"/>
    <property type="match status" value="1"/>
</dbReference>
<dbReference type="PANTHER" id="PTHR42781">
    <property type="entry name" value="SPERMIDINE/PUTRESCINE IMPORT ATP-BINDING PROTEIN POTA"/>
    <property type="match status" value="1"/>
</dbReference>
<dbReference type="PANTHER" id="PTHR42781:SF4">
    <property type="entry name" value="SPERMIDINE_PUTRESCINE IMPORT ATP-BINDING PROTEIN POTA"/>
    <property type="match status" value="1"/>
</dbReference>
<dbReference type="Pfam" id="PF00005">
    <property type="entry name" value="ABC_tran"/>
    <property type="match status" value="1"/>
</dbReference>
<dbReference type="Pfam" id="PF08402">
    <property type="entry name" value="TOBE_2"/>
    <property type="match status" value="1"/>
</dbReference>
<dbReference type="SMART" id="SM00382">
    <property type="entry name" value="AAA"/>
    <property type="match status" value="1"/>
</dbReference>
<dbReference type="SUPFAM" id="SSF50331">
    <property type="entry name" value="MOP-like"/>
    <property type="match status" value="1"/>
</dbReference>
<dbReference type="SUPFAM" id="SSF52540">
    <property type="entry name" value="P-loop containing nucleoside triphosphate hydrolases"/>
    <property type="match status" value="1"/>
</dbReference>
<dbReference type="PROSITE" id="PS00211">
    <property type="entry name" value="ABC_TRANSPORTER_1"/>
    <property type="match status" value="1"/>
</dbReference>
<dbReference type="PROSITE" id="PS50893">
    <property type="entry name" value="ABC_TRANSPORTER_2"/>
    <property type="match status" value="1"/>
</dbReference>
<dbReference type="PROSITE" id="PS51305">
    <property type="entry name" value="POTA"/>
    <property type="match status" value="1"/>
</dbReference>
<reference key="1">
    <citation type="journal article" date="2006" name="Proc. Natl. Acad. Sci. U.S.A.">
        <title>Molecular genetic anatomy of inter- and intraserotype variation in the human bacterial pathogen group A Streptococcus.</title>
        <authorList>
            <person name="Beres S.B."/>
            <person name="Richter E.W."/>
            <person name="Nagiec M.J."/>
            <person name="Sumby P."/>
            <person name="Porcella S.F."/>
            <person name="DeLeo F.R."/>
            <person name="Musser J.M."/>
        </authorList>
    </citation>
    <scope>NUCLEOTIDE SEQUENCE [LARGE SCALE GENOMIC DNA]</scope>
    <source>
        <strain>MGAS10750</strain>
    </source>
</reference>